<proteinExistence type="inferred from homology"/>
<feature type="chain" id="PRO_0000109864" description="3'-5' exoribonuclease YhaM">
    <location>
        <begin position="1"/>
        <end position="313"/>
    </location>
</feature>
<feature type="domain" description="HD" evidence="2">
    <location>
        <begin position="163"/>
        <end position="279"/>
    </location>
</feature>
<feature type="DNA-binding region" description="OB">
    <location>
        <begin position="22"/>
        <end position="90"/>
    </location>
</feature>
<keyword id="KW-0238">DNA-binding</keyword>
<keyword id="KW-0269">Exonuclease</keyword>
<keyword id="KW-0378">Hydrolase</keyword>
<keyword id="KW-0540">Nuclease</keyword>
<dbReference type="EC" id="3.1.-.-" evidence="1"/>
<dbReference type="EMBL" id="AE017262">
    <property type="protein sequence ID" value="AAT05020.1"/>
    <property type="molecule type" value="Genomic_DNA"/>
</dbReference>
<dbReference type="RefSeq" id="WP_003726774.1">
    <property type="nucleotide sequence ID" value="NC_002973.6"/>
</dbReference>
<dbReference type="SMR" id="Q71XE5"/>
<dbReference type="KEGG" id="lmf:LMOf2365_2253"/>
<dbReference type="HOGENOM" id="CLU_056349_2_0_9"/>
<dbReference type="GO" id="GO:0000175">
    <property type="term" value="F:3'-5'-RNA exonuclease activity"/>
    <property type="evidence" value="ECO:0007669"/>
    <property type="project" value="UniProtKB-UniRule"/>
</dbReference>
<dbReference type="GO" id="GO:0003677">
    <property type="term" value="F:DNA binding"/>
    <property type="evidence" value="ECO:0007669"/>
    <property type="project" value="UniProtKB-KW"/>
</dbReference>
<dbReference type="GO" id="GO:0031125">
    <property type="term" value="P:rRNA 3'-end processing"/>
    <property type="evidence" value="ECO:0007669"/>
    <property type="project" value="TreeGrafter"/>
</dbReference>
<dbReference type="CDD" id="cd00077">
    <property type="entry name" value="HDc"/>
    <property type="match status" value="1"/>
</dbReference>
<dbReference type="CDD" id="cd04492">
    <property type="entry name" value="YhaM_OBF_like"/>
    <property type="match status" value="1"/>
</dbReference>
<dbReference type="FunFam" id="1.10.3210.10:FF:000008">
    <property type="entry name" value="3'-5' exoribonuclease YhaM"/>
    <property type="match status" value="1"/>
</dbReference>
<dbReference type="Gene3D" id="1.10.3210.10">
    <property type="entry name" value="Hypothetical protein af1432"/>
    <property type="match status" value="1"/>
</dbReference>
<dbReference type="Gene3D" id="2.40.50.140">
    <property type="entry name" value="Nucleic acid-binding proteins"/>
    <property type="match status" value="1"/>
</dbReference>
<dbReference type="HAMAP" id="MF_01427">
    <property type="entry name" value="3_5_Exoribonuc_YhaM"/>
    <property type="match status" value="1"/>
</dbReference>
<dbReference type="InterPro" id="IPR020873">
    <property type="entry name" value="3'-5'_exoribonuclease_YhaM"/>
</dbReference>
<dbReference type="InterPro" id="IPR003607">
    <property type="entry name" value="HD/PDEase_dom"/>
</dbReference>
<dbReference type="InterPro" id="IPR006674">
    <property type="entry name" value="HD_domain"/>
</dbReference>
<dbReference type="InterPro" id="IPR012340">
    <property type="entry name" value="NA-bd_OB-fold"/>
</dbReference>
<dbReference type="InterPro" id="IPR004365">
    <property type="entry name" value="NA-bd_OB_tRNA"/>
</dbReference>
<dbReference type="InterPro" id="IPR050798">
    <property type="entry name" value="YhaM_exoribonuc/phosphodiest"/>
</dbReference>
<dbReference type="NCBIfam" id="NF010007">
    <property type="entry name" value="PRK13480.1"/>
    <property type="match status" value="1"/>
</dbReference>
<dbReference type="PANTHER" id="PTHR37294">
    <property type="entry name" value="3'-5' EXORIBONUCLEASE YHAM"/>
    <property type="match status" value="1"/>
</dbReference>
<dbReference type="PANTHER" id="PTHR37294:SF1">
    <property type="entry name" value="3'-5' EXORIBONUCLEASE YHAM"/>
    <property type="match status" value="1"/>
</dbReference>
<dbReference type="Pfam" id="PF01966">
    <property type="entry name" value="HD"/>
    <property type="match status" value="1"/>
</dbReference>
<dbReference type="Pfam" id="PF01336">
    <property type="entry name" value="tRNA_anti-codon"/>
    <property type="match status" value="1"/>
</dbReference>
<dbReference type="SUPFAM" id="SSF109604">
    <property type="entry name" value="HD-domain/PDEase-like"/>
    <property type="match status" value="1"/>
</dbReference>
<dbReference type="PROSITE" id="PS51831">
    <property type="entry name" value="HD"/>
    <property type="match status" value="1"/>
</dbReference>
<protein>
    <recommendedName>
        <fullName evidence="1">3'-5' exoribonuclease YhaM</fullName>
        <ecNumber evidence="1">3.1.-.-</ecNumber>
    </recommendedName>
</protein>
<name>YHAM_LISMF</name>
<evidence type="ECO:0000255" key="1">
    <source>
        <dbReference type="HAMAP-Rule" id="MF_01427"/>
    </source>
</evidence>
<evidence type="ECO:0000255" key="2">
    <source>
        <dbReference type="PROSITE-ProRule" id="PRU01175"/>
    </source>
</evidence>
<organism>
    <name type="scientific">Listeria monocytogenes serotype 4b (strain F2365)</name>
    <dbReference type="NCBI Taxonomy" id="265669"/>
    <lineage>
        <taxon>Bacteria</taxon>
        <taxon>Bacillati</taxon>
        <taxon>Bacillota</taxon>
        <taxon>Bacilli</taxon>
        <taxon>Bacillales</taxon>
        <taxon>Listeriaceae</taxon>
        <taxon>Listeria</taxon>
    </lineage>
</organism>
<gene>
    <name evidence="1" type="primary">yhaM</name>
    <name type="ordered locus">LMOf2365_2253</name>
</gene>
<reference key="1">
    <citation type="journal article" date="2004" name="Nucleic Acids Res.">
        <title>Whole genome comparisons of serotype 4b and 1/2a strains of the food-borne pathogen Listeria monocytogenes reveal new insights into the core genome components of this species.</title>
        <authorList>
            <person name="Nelson K.E."/>
            <person name="Fouts D.E."/>
            <person name="Mongodin E.F."/>
            <person name="Ravel J."/>
            <person name="DeBoy R.T."/>
            <person name="Kolonay J.F."/>
            <person name="Rasko D.A."/>
            <person name="Angiuoli S.V."/>
            <person name="Gill S.R."/>
            <person name="Paulsen I.T."/>
            <person name="Peterson J.D."/>
            <person name="White O."/>
            <person name="Nelson W.C."/>
            <person name="Nierman W.C."/>
            <person name="Beanan M.J."/>
            <person name="Brinkac L.M."/>
            <person name="Daugherty S.C."/>
            <person name="Dodson R.J."/>
            <person name="Durkin A.S."/>
            <person name="Madupu R."/>
            <person name="Haft D.H."/>
            <person name="Selengut J."/>
            <person name="Van Aken S.E."/>
            <person name="Khouri H.M."/>
            <person name="Fedorova N."/>
            <person name="Forberger H.A."/>
            <person name="Tran B."/>
            <person name="Kathariou S."/>
            <person name="Wonderling L.D."/>
            <person name="Uhlich G.A."/>
            <person name="Bayles D.O."/>
            <person name="Luchansky J.B."/>
            <person name="Fraser C.M."/>
        </authorList>
    </citation>
    <scope>NUCLEOTIDE SEQUENCE [LARGE SCALE GENOMIC DNA]</scope>
    <source>
        <strain>F2365</strain>
    </source>
</reference>
<accession>Q71XE5</accession>
<comment type="function">
    <text evidence="1">Shows a 3'-5' exoribonuclease activity.</text>
</comment>
<comment type="similarity">
    <text evidence="1">Belongs to the YhaM family.</text>
</comment>
<sequence>MEKRLLDFEVGETVDLFLLIKSSVKGTASNGKPFLSLVLQDKSGELEAKLWDVKESDEANYGVQQIVHLMGDIQNYRGRKQLKIRQIRQATALDGVSASEFMETAPINKEEMADEITQYIFEMKNANLQRITRALLKKYQDDFYDYPAAMRHHHEFVSGLSFHVVSMLRLAKSVADLYPSVNRDLLYAGVILHDLGKVIELSGPVSTTYTLEGNLIGHISIVVEEVSKIADELSIDGEEVVVLKHVLLSHHGKGEWGSPKPPLVREAEILHQIDLMDASLNMMDKVLKHTKPGEFSERVFGLDNRSFYNPIFE</sequence>